<keyword id="KW-0217">Developmental protein</keyword>
<keyword id="KW-0238">DNA-binding</keyword>
<keyword id="KW-0371">Homeobox</keyword>
<keyword id="KW-0539">Nucleus</keyword>
<keyword id="KW-1185">Reference proteome</keyword>
<comment type="function">
    <text>May have a regulatory function in the initial formation of the epidermis.</text>
</comment>
<comment type="subcellular location">
    <subcellularLocation>
        <location evidence="1">Nucleus</location>
    </subcellularLocation>
</comment>
<comment type="tissue specificity">
    <text>Expressed in the embryonic ectoderm and is specifically repressed in the CNS. High level of expression in adult skin.</text>
</comment>
<comment type="similarity">
    <text evidence="3">Belongs to the distal-less homeobox family.</text>
</comment>
<sequence>MSGPYEKKMAVLTDLSTSSHPVTKDSPTLPESSATDMGYYNGHLSTGQHDFFQTQAYSPTISSYGYPHPPHPQYNFNGLVGNESFLPKDDYQYGYRPFVHYREPPVQETVSVKEEPETEVRMVNGKPKKIRKPRTIYSSYQLAALQRRFQKAQYLALPERAELAAQLGLTQTQVKIWFQNRRSKFKKLYKNGEGPDMEHSPNNSDSMACNSPSSPPIWDNSGSRTPLQQQQQQQSLPQCSSPSYLENYHSWYTQQNQSGQHLQPSEVMHQPPPDTVY</sequence>
<protein>
    <recommendedName>
        <fullName>Homeobox protein DLL-2</fullName>
        <shortName>XDLL-2</shortName>
    </recommendedName>
</protein>
<reference key="1">
    <citation type="journal article" date="1994" name="Mech. Dev.">
        <title>Differential expression of a Distal-less homeobox gene Xdll-2 in ectodermal cell lineages.</title>
        <authorList>
            <person name="Dirksen M.L."/>
            <person name="Morasso M.I."/>
            <person name="Sargent T.D."/>
            <person name="Jamrich M."/>
        </authorList>
    </citation>
    <scope>NUCLEOTIDE SEQUENCE [MRNA]</scope>
</reference>
<reference key="2">
    <citation type="submission" date="2006-09" db="EMBL/GenBank/DDBJ databases">
        <authorList>
            <consortium name="NIH - Xenopus Gene Collection (XGC) project"/>
        </authorList>
    </citation>
    <scope>NUCLEOTIDE SEQUENCE [LARGE SCALE MRNA]</scope>
    <source>
        <tissue>Embryo</tissue>
    </source>
</reference>
<evidence type="ECO:0000255" key="1">
    <source>
        <dbReference type="PROSITE-ProRule" id="PRU00108"/>
    </source>
</evidence>
<evidence type="ECO:0000256" key="2">
    <source>
        <dbReference type="SAM" id="MobiDB-lite"/>
    </source>
</evidence>
<evidence type="ECO:0000305" key="3"/>
<organism>
    <name type="scientific">Xenopus laevis</name>
    <name type="common">African clawed frog</name>
    <dbReference type="NCBI Taxonomy" id="8355"/>
    <lineage>
        <taxon>Eukaryota</taxon>
        <taxon>Metazoa</taxon>
        <taxon>Chordata</taxon>
        <taxon>Craniata</taxon>
        <taxon>Vertebrata</taxon>
        <taxon>Euteleostomi</taxon>
        <taxon>Amphibia</taxon>
        <taxon>Batrachia</taxon>
        <taxon>Anura</taxon>
        <taxon>Pipoidea</taxon>
        <taxon>Pipidae</taxon>
        <taxon>Xenopodinae</taxon>
        <taxon>Xenopus</taxon>
        <taxon>Xenopus</taxon>
    </lineage>
</organism>
<accession>P53774</accession>
<accession>Q0IH82</accession>
<name>DLL2_XENLA</name>
<proteinExistence type="evidence at transcript level"/>
<dbReference type="EMBL" id="S74210">
    <property type="protein sequence ID" value="AAB31740.2"/>
    <property type="molecule type" value="mRNA"/>
</dbReference>
<dbReference type="EMBL" id="BC123268">
    <property type="protein sequence ID" value="AAI23269.1"/>
    <property type="molecule type" value="mRNA"/>
</dbReference>
<dbReference type="RefSeq" id="NP_001090515.1">
    <property type="nucleotide sequence ID" value="NM_001097046.1"/>
</dbReference>
<dbReference type="SMR" id="P53774"/>
<dbReference type="DNASU" id="779428"/>
<dbReference type="GeneID" id="779428"/>
<dbReference type="KEGG" id="xla:779428"/>
<dbReference type="AGR" id="Xenbase:XB-GENE-5879348"/>
<dbReference type="CTD" id="779428"/>
<dbReference type="Xenbase" id="XB-GENE-5879348">
    <property type="gene designation" value="dlx3.L"/>
</dbReference>
<dbReference type="OrthoDB" id="6159439at2759"/>
<dbReference type="Proteomes" id="UP000186698">
    <property type="component" value="Chromosome 9_10L"/>
</dbReference>
<dbReference type="Bgee" id="779428">
    <property type="expression patterns" value="Expressed in zone of skin and 4 other cell types or tissues"/>
</dbReference>
<dbReference type="GO" id="GO:0005634">
    <property type="term" value="C:nucleus"/>
    <property type="evidence" value="ECO:0007669"/>
    <property type="project" value="UniProtKB-SubCell"/>
</dbReference>
<dbReference type="GO" id="GO:0000981">
    <property type="term" value="F:DNA-binding transcription factor activity, RNA polymerase II-specific"/>
    <property type="evidence" value="ECO:0000318"/>
    <property type="project" value="GO_Central"/>
</dbReference>
<dbReference type="GO" id="GO:0000978">
    <property type="term" value="F:RNA polymerase II cis-regulatory region sequence-specific DNA binding"/>
    <property type="evidence" value="ECO:0000318"/>
    <property type="project" value="GO_Central"/>
</dbReference>
<dbReference type="GO" id="GO:0048706">
    <property type="term" value="P:embryonic skeletal system development"/>
    <property type="evidence" value="ECO:0000318"/>
    <property type="project" value="GO_Central"/>
</dbReference>
<dbReference type="GO" id="GO:0030855">
    <property type="term" value="P:epithelial cell differentiation"/>
    <property type="evidence" value="ECO:0000318"/>
    <property type="project" value="GO_Central"/>
</dbReference>
<dbReference type="GO" id="GO:0006357">
    <property type="term" value="P:regulation of transcription by RNA polymerase II"/>
    <property type="evidence" value="ECO:0000318"/>
    <property type="project" value="GO_Central"/>
</dbReference>
<dbReference type="CDD" id="cd00086">
    <property type="entry name" value="homeodomain"/>
    <property type="match status" value="1"/>
</dbReference>
<dbReference type="FunFam" id="1.10.10.60:FF:000048">
    <property type="entry name" value="Distal-less homeobox 2"/>
    <property type="match status" value="1"/>
</dbReference>
<dbReference type="Gene3D" id="1.10.10.60">
    <property type="entry name" value="Homeodomain-like"/>
    <property type="match status" value="1"/>
</dbReference>
<dbReference type="InterPro" id="IPR050460">
    <property type="entry name" value="Distal-less_Homeobox_TF"/>
</dbReference>
<dbReference type="InterPro" id="IPR022135">
    <property type="entry name" value="Distal-less_N"/>
</dbReference>
<dbReference type="InterPro" id="IPR001356">
    <property type="entry name" value="HD"/>
</dbReference>
<dbReference type="InterPro" id="IPR020479">
    <property type="entry name" value="HD_metazoa"/>
</dbReference>
<dbReference type="InterPro" id="IPR017970">
    <property type="entry name" value="Homeobox_CS"/>
</dbReference>
<dbReference type="InterPro" id="IPR009057">
    <property type="entry name" value="Homeodomain-like_sf"/>
</dbReference>
<dbReference type="InterPro" id="IPR000047">
    <property type="entry name" value="HTH_motif"/>
</dbReference>
<dbReference type="PANTHER" id="PTHR24327">
    <property type="entry name" value="HOMEOBOX PROTEIN"/>
    <property type="match status" value="1"/>
</dbReference>
<dbReference type="PANTHER" id="PTHR24327:SF28">
    <property type="entry name" value="HOMEOBOX PROTEIN DLX-3"/>
    <property type="match status" value="1"/>
</dbReference>
<dbReference type="Pfam" id="PF12413">
    <property type="entry name" value="DLL_N"/>
    <property type="match status" value="1"/>
</dbReference>
<dbReference type="Pfam" id="PF00046">
    <property type="entry name" value="Homeodomain"/>
    <property type="match status" value="1"/>
</dbReference>
<dbReference type="PRINTS" id="PR00024">
    <property type="entry name" value="HOMEOBOX"/>
</dbReference>
<dbReference type="PRINTS" id="PR00031">
    <property type="entry name" value="HTHREPRESSR"/>
</dbReference>
<dbReference type="SMART" id="SM00389">
    <property type="entry name" value="HOX"/>
    <property type="match status" value="1"/>
</dbReference>
<dbReference type="SUPFAM" id="SSF46689">
    <property type="entry name" value="Homeodomain-like"/>
    <property type="match status" value="1"/>
</dbReference>
<dbReference type="PROSITE" id="PS00027">
    <property type="entry name" value="HOMEOBOX_1"/>
    <property type="match status" value="1"/>
</dbReference>
<dbReference type="PROSITE" id="PS50071">
    <property type="entry name" value="HOMEOBOX_2"/>
    <property type="match status" value="1"/>
</dbReference>
<gene>
    <name type="primary">dll2</name>
</gene>
<feature type="chain" id="PRO_0000049037" description="Homeobox protein DLL-2">
    <location>
        <begin position="1"/>
        <end position="277"/>
    </location>
</feature>
<feature type="DNA-binding region" description="Homeobox" evidence="1">
    <location>
        <begin position="130"/>
        <end position="189"/>
    </location>
</feature>
<feature type="region of interest" description="Disordered" evidence="2">
    <location>
        <begin position="1"/>
        <end position="33"/>
    </location>
</feature>
<feature type="region of interest" description="Disordered" evidence="2">
    <location>
        <begin position="191"/>
        <end position="277"/>
    </location>
</feature>
<feature type="compositionally biased region" description="Polar residues" evidence="2">
    <location>
        <begin position="14"/>
        <end position="33"/>
    </location>
</feature>
<feature type="compositionally biased region" description="Polar residues" evidence="2">
    <location>
        <begin position="200"/>
        <end position="212"/>
    </location>
</feature>
<feature type="compositionally biased region" description="Low complexity" evidence="2">
    <location>
        <begin position="226"/>
        <end position="243"/>
    </location>
</feature>
<feature type="compositionally biased region" description="Polar residues" evidence="2">
    <location>
        <begin position="250"/>
        <end position="263"/>
    </location>
</feature>